<comment type="function">
    <text evidence="2 4">Heavy-metal-binding protein. Binds lead, cadmium and copper. May be involved in heavy-metal transport (PubMed:18823312). May be involved in cadmium transport and play a role in cadmium detoxification (PubMed:21072340).</text>
</comment>
<comment type="subunit">
    <text evidence="2 3">Interacts with ZHD11/HB29 and ACBP2 (via ankyrin repeats). May also interact with HB21.</text>
</comment>
<comment type="interaction">
    <interactant intactId="EBI-2008207">
        <id>Q9SZN7</id>
    </interactant>
    <interactant intactId="EBI-368234">
        <id>Q9STP8</id>
        <label>ACBP2</label>
    </interactant>
    <organismsDiffer>false</organismsDiffer>
    <experiments>5</experiments>
</comment>
<comment type="interaction">
    <interactant intactId="EBI-2008207">
        <id>Q9SZN7</id>
    </interactant>
    <interactant intactId="EBI-25530219">
        <id>Q9SQR3</id>
        <label>D14</label>
    </interactant>
    <organismsDiffer>false</organismsDiffer>
    <experiments>3</experiments>
</comment>
<comment type="interaction">
    <interactant intactId="EBI-2008207">
        <id>Q9SZN7</id>
    </interactant>
    <interactant intactId="EBI-25519488">
        <id>Q9SZU7</id>
        <label>KAI2</label>
    </interactant>
    <organismsDiffer>false</organismsDiffer>
    <experiments>3</experiments>
</comment>
<comment type="interaction">
    <interactant intactId="EBI-2008207">
        <id>Q9SZN7</id>
    </interactant>
    <interactant intactId="EBI-1806317">
        <id>Q9SEZ1</id>
        <label>ZHD11</label>
    </interactant>
    <organismsDiffer>false</organismsDiffer>
    <experiments>3</experiments>
</comment>
<comment type="subcellular location">
    <subcellularLocation>
        <location evidence="3">Nucleus membrane</location>
    </subcellularLocation>
    <subcellularLocation>
        <location evidence="2">Cell membrane</location>
    </subcellularLocation>
    <text evidence="2 3">PubMed:18974936 shows that isopernylation may be important for a speckle-like nuclear localization in a heterologous system, while PubMed:18823312 shows a plasma membrane localization.</text>
</comment>
<comment type="tissue specificity">
    <text evidence="2 3 4">Expressed in roots, stems and flowers. Lower expression in siliques and leaves. Expressed in the vascular tissues. Detected in lateral roots, shoot apical meristem, petals of unopened flowers and weak expression in leaf vasculature.</text>
</comment>
<comment type="induction">
    <text evidence="2 3">Up-regulated by cadmium and zinc, but not by lead or copper. Up-regulated by cold, drought and salt stress. Not induced by abscisic acid or by leaf senescence.</text>
</comment>
<comment type="disruption phenotype">
    <text evidence="3 4">No visible phenotype. Inhibition of HB29-dependent induction of stress-related target genes.</text>
</comment>
<comment type="similarity">
    <text evidence="8">Belongs to the HIPP family.</text>
</comment>
<gene>
    <name evidence="5 6" type="primary">HIPP26</name>
    <name evidence="7" type="synonym">FP6</name>
    <name evidence="10" type="ordered locus">At4g38580</name>
    <name evidence="11" type="ORF">F20M13.140</name>
</gene>
<dbReference type="EMBL" id="AL035540">
    <property type="protein sequence ID" value="CAB37514.1"/>
    <property type="molecule type" value="Genomic_DNA"/>
</dbReference>
<dbReference type="EMBL" id="AL161593">
    <property type="protein sequence ID" value="CAB80522.1"/>
    <property type="molecule type" value="Genomic_DNA"/>
</dbReference>
<dbReference type="EMBL" id="CP002687">
    <property type="protein sequence ID" value="AEE86950.1"/>
    <property type="molecule type" value="Genomic_DNA"/>
</dbReference>
<dbReference type="EMBL" id="CP002687">
    <property type="protein sequence ID" value="ANM67729.1"/>
    <property type="molecule type" value="Genomic_DNA"/>
</dbReference>
<dbReference type="EMBL" id="AF324677">
    <property type="protein sequence ID" value="AAG40028.1"/>
    <property type="molecule type" value="mRNA"/>
</dbReference>
<dbReference type="EMBL" id="AF326881">
    <property type="protein sequence ID" value="AAG41463.1"/>
    <property type="molecule type" value="mRNA"/>
</dbReference>
<dbReference type="EMBL" id="AF339701">
    <property type="protein sequence ID" value="AAK00383.1"/>
    <property type="molecule type" value="mRNA"/>
</dbReference>
<dbReference type="EMBL" id="AF380660">
    <property type="protein sequence ID" value="AAK55741.1"/>
    <property type="molecule type" value="mRNA"/>
</dbReference>
<dbReference type="EMBL" id="AY056095">
    <property type="protein sequence ID" value="AAL06983.1"/>
    <property type="molecule type" value="mRNA"/>
</dbReference>
<dbReference type="EMBL" id="AY084288">
    <property type="protein sequence ID" value="AAM60879.1"/>
    <property type="molecule type" value="mRNA"/>
</dbReference>
<dbReference type="EMBL" id="U64909">
    <property type="protein sequence ID" value="AAD09510.1"/>
    <property type="molecule type" value="mRNA"/>
</dbReference>
<dbReference type="PIR" id="T05686">
    <property type="entry name" value="T05686"/>
</dbReference>
<dbReference type="RefSeq" id="NP_001320160.1">
    <property type="nucleotide sequence ID" value="NM_001342507.1"/>
</dbReference>
<dbReference type="RefSeq" id="NP_195570.1">
    <property type="nucleotide sequence ID" value="NM_120019.3"/>
</dbReference>
<dbReference type="SMR" id="Q9SZN7"/>
<dbReference type="BioGRID" id="15295">
    <property type="interactions" value="5"/>
</dbReference>
<dbReference type="FunCoup" id="Q9SZN7">
    <property type="interactions" value="352"/>
</dbReference>
<dbReference type="IntAct" id="Q9SZN7">
    <property type="interactions" value="6"/>
</dbReference>
<dbReference type="STRING" id="3702.Q9SZN7"/>
<dbReference type="iPTMnet" id="Q9SZN7"/>
<dbReference type="SwissPalm" id="Q9SZN7"/>
<dbReference type="PaxDb" id="3702-AT4G38580.1"/>
<dbReference type="ProteomicsDB" id="230190"/>
<dbReference type="EnsemblPlants" id="AT4G38580.1">
    <property type="protein sequence ID" value="AT4G38580.1"/>
    <property type="gene ID" value="AT4G38580"/>
</dbReference>
<dbReference type="EnsemblPlants" id="AT4G38580.2">
    <property type="protein sequence ID" value="AT4G38580.2"/>
    <property type="gene ID" value="AT4G38580"/>
</dbReference>
<dbReference type="GeneID" id="830015"/>
<dbReference type="Gramene" id="AT4G38580.1">
    <property type="protein sequence ID" value="AT4G38580.1"/>
    <property type="gene ID" value="AT4G38580"/>
</dbReference>
<dbReference type="Gramene" id="AT4G38580.2">
    <property type="protein sequence ID" value="AT4G38580.2"/>
    <property type="gene ID" value="AT4G38580"/>
</dbReference>
<dbReference type="KEGG" id="ath:AT4G38580"/>
<dbReference type="Araport" id="AT4G38580"/>
<dbReference type="TAIR" id="AT4G38580">
    <property type="gene designation" value="FP6"/>
</dbReference>
<dbReference type="eggNOG" id="KOG1603">
    <property type="taxonomic scope" value="Eukaryota"/>
</dbReference>
<dbReference type="HOGENOM" id="CLU_100095_1_0_1"/>
<dbReference type="InParanoid" id="Q9SZN7"/>
<dbReference type="OMA" id="ENTSACA"/>
<dbReference type="OrthoDB" id="666972at2759"/>
<dbReference type="PhylomeDB" id="Q9SZN7"/>
<dbReference type="PRO" id="PR:Q9SZN7"/>
<dbReference type="Proteomes" id="UP000006548">
    <property type="component" value="Chromosome 4"/>
</dbReference>
<dbReference type="ExpressionAtlas" id="Q9SZN7">
    <property type="expression patterns" value="baseline and differential"/>
</dbReference>
<dbReference type="GO" id="GO:0031965">
    <property type="term" value="C:nuclear membrane"/>
    <property type="evidence" value="ECO:0007669"/>
    <property type="project" value="UniProtKB-SubCell"/>
</dbReference>
<dbReference type="GO" id="GO:0005886">
    <property type="term" value="C:plasma membrane"/>
    <property type="evidence" value="ECO:0007005"/>
    <property type="project" value="TAIR"/>
</dbReference>
<dbReference type="GO" id="GO:0009506">
    <property type="term" value="C:plasmodesma"/>
    <property type="evidence" value="ECO:0007005"/>
    <property type="project" value="TAIR"/>
</dbReference>
<dbReference type="GO" id="GO:0046870">
    <property type="term" value="F:cadmium ion binding"/>
    <property type="evidence" value="ECO:0000314"/>
    <property type="project" value="UniProtKB"/>
</dbReference>
<dbReference type="GO" id="GO:0005507">
    <property type="term" value="F:copper ion binding"/>
    <property type="evidence" value="ECO:0000314"/>
    <property type="project" value="UniProtKB"/>
</dbReference>
<dbReference type="GO" id="GO:0032791">
    <property type="term" value="F:lead ion binding"/>
    <property type="evidence" value="ECO:0000314"/>
    <property type="project" value="UniProtKB"/>
</dbReference>
<dbReference type="GO" id="GO:0010286">
    <property type="term" value="P:heat acclimation"/>
    <property type="evidence" value="ECO:0000270"/>
    <property type="project" value="TAIR"/>
</dbReference>
<dbReference type="CDD" id="cd00371">
    <property type="entry name" value="HMA"/>
    <property type="match status" value="1"/>
</dbReference>
<dbReference type="FunFam" id="3.30.70.100:FF:000035">
    <property type="entry name" value="Heavy metal-associated isoprenylated plant protein 26"/>
    <property type="match status" value="1"/>
</dbReference>
<dbReference type="Gene3D" id="3.30.70.100">
    <property type="match status" value="1"/>
</dbReference>
<dbReference type="InterPro" id="IPR006121">
    <property type="entry name" value="HMA_dom"/>
</dbReference>
<dbReference type="InterPro" id="IPR036163">
    <property type="entry name" value="HMA_dom_sf"/>
</dbReference>
<dbReference type="PANTHER" id="PTHR22814">
    <property type="entry name" value="COPPER TRANSPORT PROTEIN ATOX1-RELATED"/>
    <property type="match status" value="1"/>
</dbReference>
<dbReference type="PANTHER" id="PTHR22814:SF302">
    <property type="entry name" value="HEAVY METAL-ASSOCIATED ISOPRENYLATED PLANT PROTEIN 26"/>
    <property type="match status" value="1"/>
</dbReference>
<dbReference type="Pfam" id="PF00403">
    <property type="entry name" value="HMA"/>
    <property type="match status" value="1"/>
</dbReference>
<dbReference type="SUPFAM" id="SSF55008">
    <property type="entry name" value="HMA, heavy metal-associated domain"/>
    <property type="match status" value="1"/>
</dbReference>
<dbReference type="PROSITE" id="PS50846">
    <property type="entry name" value="HMA_2"/>
    <property type="match status" value="1"/>
</dbReference>
<keyword id="KW-0104">Cadmium</keyword>
<keyword id="KW-1003">Cell membrane</keyword>
<keyword id="KW-0449">Lipoprotein</keyword>
<keyword id="KW-0472">Membrane</keyword>
<keyword id="KW-0479">Metal-binding</keyword>
<keyword id="KW-0488">Methylation</keyword>
<keyword id="KW-0539">Nucleus</keyword>
<keyword id="KW-0636">Prenylation</keyword>
<keyword id="KW-1185">Reference proteome</keyword>
<sequence length="153" mass="17024">MGVLDHVSEMFDCSHGHKIKKRKQLQTVEIKVKMDCEGCERKVRRSVEGMKGVSSVTLEPKAHKVTVVGYVDPNKVVARMSHRTGKKVELWPYVPYDVVAHPYAAGVYDKKAPSGYVRRVDDPGVSQLARASSTEVRYTTAFSDENPAACVVM</sequence>
<protein>
    <recommendedName>
        <fullName evidence="5 6">Heavy metal-associated isoprenylated plant protein 26</fullName>
        <shortName evidence="6">AtHIP26</shortName>
        <shortName evidence="5 6">AtHIPP26</shortName>
    </recommendedName>
    <alternativeName>
        <fullName evidence="7">Farnesylated protein 6</fullName>
        <shortName evidence="7">AtFP6</shortName>
    </alternativeName>
</protein>
<feature type="chain" id="PRO_0000417497" description="Heavy metal-associated isoprenylated plant protein 26">
    <location>
        <begin position="1"/>
        <end position="150"/>
    </location>
</feature>
<feature type="propeptide" id="PRO_0000417498" description="Removed in mature form" evidence="8">
    <location>
        <begin position="151"/>
        <end position="153"/>
    </location>
</feature>
<feature type="domain" description="HMA" evidence="1">
    <location>
        <begin position="25"/>
        <end position="89"/>
    </location>
</feature>
<feature type="binding site" evidence="1">
    <location>
        <position position="36"/>
    </location>
    <ligand>
        <name>a metal cation</name>
        <dbReference type="ChEBI" id="CHEBI:25213"/>
    </ligand>
</feature>
<feature type="binding site" evidence="1">
    <location>
        <position position="39"/>
    </location>
    <ligand>
        <name>a metal cation</name>
        <dbReference type="ChEBI" id="CHEBI:25213"/>
    </ligand>
</feature>
<feature type="modified residue" description="Cysteine methyl ester" evidence="9">
    <location>
        <position position="150"/>
    </location>
</feature>
<feature type="lipid moiety-binding region" description="S-farnesyl cysteine" evidence="9">
    <location>
        <position position="150"/>
    </location>
</feature>
<feature type="mutagenesis site" description="In HIPP26-4; loss of interaction with HB29; when associated with G-39." evidence="3">
    <original>C</original>
    <variation>G</variation>
    <location>
        <position position="36"/>
    </location>
</feature>
<feature type="mutagenesis site" description="In HIPP26-4; loss of interaction with HB29; when associated with G-36." evidence="3">
    <original>C</original>
    <variation>G</variation>
    <location>
        <position position="39"/>
    </location>
</feature>
<feature type="mutagenesis site" description="Loss of prenylation and localization to membrane." evidence="3">
    <original>C</original>
    <variation>G</variation>
    <location>
        <position position="150"/>
    </location>
</feature>
<feature type="sequence conflict" description="In Ref. 4; AAM60879." evidence="8" ref="4">
    <original>A</original>
    <variation>T</variation>
    <location>
        <position position="104"/>
    </location>
</feature>
<proteinExistence type="evidence at protein level"/>
<name>HIP26_ARATH</name>
<evidence type="ECO:0000255" key="1">
    <source>
        <dbReference type="PROSITE-ProRule" id="PRU00280"/>
    </source>
</evidence>
<evidence type="ECO:0000269" key="2">
    <source>
    </source>
</evidence>
<evidence type="ECO:0000269" key="3">
    <source>
    </source>
</evidence>
<evidence type="ECO:0000269" key="4">
    <source>
    </source>
</evidence>
<evidence type="ECO:0000303" key="5">
    <source>
    </source>
</evidence>
<evidence type="ECO:0000303" key="6">
    <source>
    </source>
</evidence>
<evidence type="ECO:0000303" key="7">
    <source>
    </source>
</evidence>
<evidence type="ECO:0000305" key="8"/>
<evidence type="ECO:0000305" key="9">
    <source>
    </source>
</evidence>
<evidence type="ECO:0000312" key="10">
    <source>
        <dbReference type="Araport" id="AT4G38580"/>
    </source>
</evidence>
<evidence type="ECO:0000312" key="11">
    <source>
        <dbReference type="EMBL" id="CAB37514.1"/>
    </source>
</evidence>
<organism>
    <name type="scientific">Arabidopsis thaliana</name>
    <name type="common">Mouse-ear cress</name>
    <dbReference type="NCBI Taxonomy" id="3702"/>
    <lineage>
        <taxon>Eukaryota</taxon>
        <taxon>Viridiplantae</taxon>
        <taxon>Streptophyta</taxon>
        <taxon>Embryophyta</taxon>
        <taxon>Tracheophyta</taxon>
        <taxon>Spermatophyta</taxon>
        <taxon>Magnoliopsida</taxon>
        <taxon>eudicotyledons</taxon>
        <taxon>Gunneridae</taxon>
        <taxon>Pentapetalae</taxon>
        <taxon>rosids</taxon>
        <taxon>malvids</taxon>
        <taxon>Brassicales</taxon>
        <taxon>Brassicaceae</taxon>
        <taxon>Camelineae</taxon>
        <taxon>Arabidopsis</taxon>
    </lineage>
</organism>
<reference key="1">
    <citation type="journal article" date="1999" name="Nature">
        <title>Sequence and analysis of chromosome 4 of the plant Arabidopsis thaliana.</title>
        <authorList>
            <person name="Mayer K.F.X."/>
            <person name="Schueller C."/>
            <person name="Wambutt R."/>
            <person name="Murphy G."/>
            <person name="Volckaert G."/>
            <person name="Pohl T."/>
            <person name="Duesterhoeft A."/>
            <person name="Stiekema W."/>
            <person name="Entian K.-D."/>
            <person name="Terryn N."/>
            <person name="Harris B."/>
            <person name="Ansorge W."/>
            <person name="Brandt P."/>
            <person name="Grivell L.A."/>
            <person name="Rieger M."/>
            <person name="Weichselgartner M."/>
            <person name="de Simone V."/>
            <person name="Obermaier B."/>
            <person name="Mache R."/>
            <person name="Mueller M."/>
            <person name="Kreis M."/>
            <person name="Delseny M."/>
            <person name="Puigdomenech P."/>
            <person name="Watson M."/>
            <person name="Schmidtheini T."/>
            <person name="Reichert B."/>
            <person name="Portetelle D."/>
            <person name="Perez-Alonso M."/>
            <person name="Boutry M."/>
            <person name="Bancroft I."/>
            <person name="Vos P."/>
            <person name="Hoheisel J."/>
            <person name="Zimmermann W."/>
            <person name="Wedler H."/>
            <person name="Ridley P."/>
            <person name="Langham S.-A."/>
            <person name="McCullagh B."/>
            <person name="Bilham L."/>
            <person name="Robben J."/>
            <person name="van der Schueren J."/>
            <person name="Grymonprez B."/>
            <person name="Chuang Y.-J."/>
            <person name="Vandenbussche F."/>
            <person name="Braeken M."/>
            <person name="Weltjens I."/>
            <person name="Voet M."/>
            <person name="Bastiaens I."/>
            <person name="Aert R."/>
            <person name="Defoor E."/>
            <person name="Weitzenegger T."/>
            <person name="Bothe G."/>
            <person name="Ramsperger U."/>
            <person name="Hilbert H."/>
            <person name="Braun M."/>
            <person name="Holzer E."/>
            <person name="Brandt A."/>
            <person name="Peters S."/>
            <person name="van Staveren M."/>
            <person name="Dirkse W."/>
            <person name="Mooijman P."/>
            <person name="Klein Lankhorst R."/>
            <person name="Rose M."/>
            <person name="Hauf J."/>
            <person name="Koetter P."/>
            <person name="Berneiser S."/>
            <person name="Hempel S."/>
            <person name="Feldpausch M."/>
            <person name="Lamberth S."/>
            <person name="Van den Daele H."/>
            <person name="De Keyser A."/>
            <person name="Buysshaert C."/>
            <person name="Gielen J."/>
            <person name="Villarroel R."/>
            <person name="De Clercq R."/>
            <person name="van Montagu M."/>
            <person name="Rogers J."/>
            <person name="Cronin A."/>
            <person name="Quail M.A."/>
            <person name="Bray-Allen S."/>
            <person name="Clark L."/>
            <person name="Doggett J."/>
            <person name="Hall S."/>
            <person name="Kay M."/>
            <person name="Lennard N."/>
            <person name="McLay K."/>
            <person name="Mayes R."/>
            <person name="Pettett A."/>
            <person name="Rajandream M.A."/>
            <person name="Lyne M."/>
            <person name="Benes V."/>
            <person name="Rechmann S."/>
            <person name="Borkova D."/>
            <person name="Bloecker H."/>
            <person name="Scharfe M."/>
            <person name="Grimm M."/>
            <person name="Loehnert T.-H."/>
            <person name="Dose S."/>
            <person name="de Haan M."/>
            <person name="Maarse A.C."/>
            <person name="Schaefer M."/>
            <person name="Mueller-Auer S."/>
            <person name="Gabel C."/>
            <person name="Fuchs M."/>
            <person name="Fartmann B."/>
            <person name="Granderath K."/>
            <person name="Dauner D."/>
            <person name="Herzl A."/>
            <person name="Neumann S."/>
            <person name="Argiriou A."/>
            <person name="Vitale D."/>
            <person name="Liguori R."/>
            <person name="Piravandi E."/>
            <person name="Massenet O."/>
            <person name="Quigley F."/>
            <person name="Clabauld G."/>
            <person name="Muendlein A."/>
            <person name="Felber R."/>
            <person name="Schnabl S."/>
            <person name="Hiller R."/>
            <person name="Schmidt W."/>
            <person name="Lecharny A."/>
            <person name="Aubourg S."/>
            <person name="Chefdor F."/>
            <person name="Cooke R."/>
            <person name="Berger C."/>
            <person name="Monfort A."/>
            <person name="Casacuberta E."/>
            <person name="Gibbons T."/>
            <person name="Weber N."/>
            <person name="Vandenbol M."/>
            <person name="Bargues M."/>
            <person name="Terol J."/>
            <person name="Torres A."/>
            <person name="Perez-Perez A."/>
            <person name="Purnelle B."/>
            <person name="Bent E."/>
            <person name="Johnson S."/>
            <person name="Tacon D."/>
            <person name="Jesse T."/>
            <person name="Heijnen L."/>
            <person name="Schwarz S."/>
            <person name="Scholler P."/>
            <person name="Heber S."/>
            <person name="Francs P."/>
            <person name="Bielke C."/>
            <person name="Frishman D."/>
            <person name="Haase D."/>
            <person name="Lemcke K."/>
            <person name="Mewes H.-W."/>
            <person name="Stocker S."/>
            <person name="Zaccaria P."/>
            <person name="Bevan M."/>
            <person name="Wilson R.K."/>
            <person name="de la Bastide M."/>
            <person name="Habermann K."/>
            <person name="Parnell L."/>
            <person name="Dedhia N."/>
            <person name="Gnoj L."/>
            <person name="Schutz K."/>
            <person name="Huang E."/>
            <person name="Spiegel L."/>
            <person name="Sekhon M."/>
            <person name="Murray J."/>
            <person name="Sheet P."/>
            <person name="Cordes M."/>
            <person name="Abu-Threideh J."/>
            <person name="Stoneking T."/>
            <person name="Kalicki J."/>
            <person name="Graves T."/>
            <person name="Harmon G."/>
            <person name="Edwards J."/>
            <person name="Latreille P."/>
            <person name="Courtney L."/>
            <person name="Cloud J."/>
            <person name="Abbott A."/>
            <person name="Scott K."/>
            <person name="Johnson D."/>
            <person name="Minx P."/>
            <person name="Bentley D."/>
            <person name="Fulton B."/>
            <person name="Miller N."/>
            <person name="Greco T."/>
            <person name="Kemp K."/>
            <person name="Kramer J."/>
            <person name="Fulton L."/>
            <person name="Mardis E."/>
            <person name="Dante M."/>
            <person name="Pepin K."/>
            <person name="Hillier L.W."/>
            <person name="Nelson J."/>
            <person name="Spieth J."/>
            <person name="Ryan E."/>
            <person name="Andrews S."/>
            <person name="Geisel C."/>
            <person name="Layman D."/>
            <person name="Du H."/>
            <person name="Ali J."/>
            <person name="Berghoff A."/>
            <person name="Jones K."/>
            <person name="Drone K."/>
            <person name="Cotton M."/>
            <person name="Joshu C."/>
            <person name="Antonoiu B."/>
            <person name="Zidanic M."/>
            <person name="Strong C."/>
            <person name="Sun H."/>
            <person name="Lamar B."/>
            <person name="Yordan C."/>
            <person name="Ma P."/>
            <person name="Zhong J."/>
            <person name="Preston R."/>
            <person name="Vil D."/>
            <person name="Shekher M."/>
            <person name="Matero A."/>
            <person name="Shah R."/>
            <person name="Swaby I.K."/>
            <person name="O'Shaughnessy A."/>
            <person name="Rodriguez M."/>
            <person name="Hoffman J."/>
            <person name="Till S."/>
            <person name="Granat S."/>
            <person name="Shohdy N."/>
            <person name="Hasegawa A."/>
            <person name="Hameed A."/>
            <person name="Lodhi M."/>
            <person name="Johnson A."/>
            <person name="Chen E."/>
            <person name="Marra M.A."/>
            <person name="Martienssen R."/>
            <person name="McCombie W.R."/>
        </authorList>
    </citation>
    <scope>NUCLEOTIDE SEQUENCE [LARGE SCALE GENOMIC DNA]</scope>
    <source>
        <strain>cv. Columbia</strain>
    </source>
</reference>
<reference key="2">
    <citation type="journal article" date="2017" name="Plant J.">
        <title>Araport11: a complete reannotation of the Arabidopsis thaliana reference genome.</title>
        <authorList>
            <person name="Cheng C.Y."/>
            <person name="Krishnakumar V."/>
            <person name="Chan A.P."/>
            <person name="Thibaud-Nissen F."/>
            <person name="Schobel S."/>
            <person name="Town C.D."/>
        </authorList>
    </citation>
    <scope>GENOME REANNOTATION</scope>
    <source>
        <strain>cv. Columbia</strain>
    </source>
</reference>
<reference key="3">
    <citation type="journal article" date="2003" name="Science">
        <title>Empirical analysis of transcriptional activity in the Arabidopsis genome.</title>
        <authorList>
            <person name="Yamada K."/>
            <person name="Lim J."/>
            <person name="Dale J.M."/>
            <person name="Chen H."/>
            <person name="Shinn P."/>
            <person name="Palm C.J."/>
            <person name="Southwick A.M."/>
            <person name="Wu H.C."/>
            <person name="Kim C.J."/>
            <person name="Nguyen M."/>
            <person name="Pham P.K."/>
            <person name="Cheuk R.F."/>
            <person name="Karlin-Newmann G."/>
            <person name="Liu S.X."/>
            <person name="Lam B."/>
            <person name="Sakano H."/>
            <person name="Wu T."/>
            <person name="Yu G."/>
            <person name="Miranda M."/>
            <person name="Quach H.L."/>
            <person name="Tripp M."/>
            <person name="Chang C.H."/>
            <person name="Lee J.M."/>
            <person name="Toriumi M.J."/>
            <person name="Chan M.M."/>
            <person name="Tang C.C."/>
            <person name="Onodera C.S."/>
            <person name="Deng J.M."/>
            <person name="Akiyama K."/>
            <person name="Ansari Y."/>
            <person name="Arakawa T."/>
            <person name="Banh J."/>
            <person name="Banno F."/>
            <person name="Bowser L."/>
            <person name="Brooks S.Y."/>
            <person name="Carninci P."/>
            <person name="Chao Q."/>
            <person name="Choy N."/>
            <person name="Enju A."/>
            <person name="Goldsmith A.D."/>
            <person name="Gurjal M."/>
            <person name="Hansen N.F."/>
            <person name="Hayashizaki Y."/>
            <person name="Johnson-Hopson C."/>
            <person name="Hsuan V.W."/>
            <person name="Iida K."/>
            <person name="Karnes M."/>
            <person name="Khan S."/>
            <person name="Koesema E."/>
            <person name="Ishida J."/>
            <person name="Jiang P.X."/>
            <person name="Jones T."/>
            <person name="Kawai J."/>
            <person name="Kamiya A."/>
            <person name="Meyers C."/>
            <person name="Nakajima M."/>
            <person name="Narusaka M."/>
            <person name="Seki M."/>
            <person name="Sakurai T."/>
            <person name="Satou M."/>
            <person name="Tamse R."/>
            <person name="Vaysberg M."/>
            <person name="Wallender E.K."/>
            <person name="Wong C."/>
            <person name="Yamamura Y."/>
            <person name="Yuan S."/>
            <person name="Shinozaki K."/>
            <person name="Davis R.W."/>
            <person name="Theologis A."/>
            <person name="Ecker J.R."/>
        </authorList>
    </citation>
    <scope>NUCLEOTIDE SEQUENCE [LARGE SCALE MRNA]</scope>
    <source>
        <strain>cv. Columbia</strain>
    </source>
</reference>
<reference key="4">
    <citation type="submission" date="2002-03" db="EMBL/GenBank/DDBJ databases">
        <title>Full-length cDNA from Arabidopsis thaliana.</title>
        <authorList>
            <person name="Brover V.V."/>
            <person name="Troukhan M.E."/>
            <person name="Alexandrov N.A."/>
            <person name="Lu Y.-P."/>
            <person name="Flavell R.B."/>
            <person name="Feldmann K.A."/>
        </authorList>
    </citation>
    <scope>NUCLEOTIDE SEQUENCE [LARGE SCALE MRNA]</scope>
</reference>
<reference key="5">
    <citation type="journal article" date="1996" name="Mol. Biotechnol.">
        <title>Identification of cDNAs encoding isoprenylated proteins.</title>
        <authorList>
            <person name="Crowell D.N."/>
            <person name="Biermann B.J."/>
            <person name="Randall S.K."/>
        </authorList>
    </citation>
    <scope>NUCLEOTIDE SEQUENCE [MRNA] OF 38-153</scope>
</reference>
<reference key="6">
    <citation type="journal article" date="1999" name="Plant Mol. Biol.">
        <title>A new class of proteins capable of binding transition metals.</title>
        <authorList>
            <person name="Dykema P.E."/>
            <person name="Sipes P.R."/>
            <person name="Marie A."/>
            <person name="Biermann B.J."/>
            <person name="Crowell D.N."/>
            <person name="Randall S.K."/>
        </authorList>
    </citation>
    <scope>GENE FAMILY</scope>
</reference>
<reference key="7">
    <citation type="journal article" date="2009" name="New Phytol.">
        <title>Arabidopsis thaliana acyl-CoA-binding protein ACBP2 interacts with heavy-metal-binding farnesylated protein AtFP6.</title>
        <authorList>
            <person name="Gao W."/>
            <person name="Xiao S."/>
            <person name="Li H.Y."/>
            <person name="Tsao S.W."/>
            <person name="Chye M.L."/>
        </authorList>
    </citation>
    <scope>FUNCTION</scope>
    <scope>INTERACTION WITH ACBP2</scope>
    <scope>SUBCELLULAR LOCATION</scope>
    <scope>TISSUE SPECIFICITY</scope>
    <scope>INDUCTION BY CADMIUM AND ZINC</scope>
    <source>
        <strain>cv. Columbia</strain>
    </source>
</reference>
<reference key="8">
    <citation type="journal article" date="2009" name="Plant Mol. Biol.">
        <title>Stress induced and nuclear localized HIPP26 from Arabidopsis thaliana interacts via its heavy metal associated domain with the drought stress related zinc finger transcription factor ATHB29.</title>
        <authorList>
            <person name="Barth O."/>
            <person name="Vogt S."/>
            <person name="Uhlemann R."/>
            <person name="Zschiesche W."/>
            <person name="Humbeck K."/>
        </authorList>
    </citation>
    <scope>GENE FAMILY</scope>
    <scope>NOMENCLATURE</scope>
    <scope>INTERACTION WITH ZHD11/HB29</scope>
    <scope>INDUCTION BY COLD; DROUGHT; SALT AND ABSCISIC ACID</scope>
    <scope>SUBCELLULAR LOCATION</scope>
    <scope>MUTAGENESIS OF CYS-36; CYS-39 AND CYS-150</scope>
    <scope>TISSUE SPECIFICITY</scope>
    <scope>ISOPRENYLATION AT CYS-150</scope>
    <scope>METHYLATION AT CYS-150</scope>
    <scope>DISRUPTION PHENOTYPE</scope>
    <source>
        <strain>cv. Columbia</strain>
    </source>
</reference>
<reference key="9">
    <citation type="journal article" date="2010" name="Metallomics">
        <title>Metallochaperone-like genes in Arabidopsis thaliana.</title>
        <authorList>
            <person name="Tehseen M."/>
            <person name="Cairns N."/>
            <person name="Sherson S."/>
            <person name="Cobbett C.S."/>
        </authorList>
    </citation>
    <scope>FUNCTION</scope>
    <scope>DISRUPTION PHENOTYPE</scope>
    <scope>TISSUE SPECIFICITY</scope>
    <scope>GENE FAMILY</scope>
    <scope>NOMENCLATURE</scope>
</reference>
<reference key="10">
    <citation type="journal article" date="2013" name="FEBS J.">
        <title>Heavy metal-associated isoprenylated plant protein (HIPP): characterization of a family of proteins exclusive to plants.</title>
        <authorList>
            <person name="de Abreu-Neto J.B."/>
            <person name="Turchetto-Zolet A.C."/>
            <person name="de Oliveira L.F."/>
            <person name="Zanettini M.H."/>
            <person name="Margis-Pinheiro M."/>
        </authorList>
    </citation>
    <scope>GENE FAMILY</scope>
    <scope>NOMENCLATURE</scope>
</reference>
<accession>Q9SZN7</accession>
<accession>Q8LGG1</accession>
<accession>Q9ZRE4</accession>